<evidence type="ECO:0000255" key="1">
    <source>
        <dbReference type="HAMAP-Rule" id="MF_01233"/>
    </source>
</evidence>
<evidence type="ECO:0000305" key="2"/>
<dbReference type="EMBL" id="CP000970">
    <property type="protein sequence ID" value="ACB18895.1"/>
    <property type="molecule type" value="Genomic_DNA"/>
</dbReference>
<dbReference type="RefSeq" id="WP_000379245.1">
    <property type="nucleotide sequence ID" value="NC_010498.1"/>
</dbReference>
<dbReference type="SMR" id="B1LLU0"/>
<dbReference type="GeneID" id="93778187"/>
<dbReference type="KEGG" id="ecm:EcSMS35_4131"/>
<dbReference type="HOGENOM" id="CLU_039613_8_2_6"/>
<dbReference type="Proteomes" id="UP000007011">
    <property type="component" value="Chromosome"/>
</dbReference>
<dbReference type="GO" id="GO:0003677">
    <property type="term" value="F:DNA binding"/>
    <property type="evidence" value="ECO:0007669"/>
    <property type="project" value="UniProtKB-KW"/>
</dbReference>
<dbReference type="GO" id="GO:0003700">
    <property type="term" value="F:DNA-binding transcription factor activity"/>
    <property type="evidence" value="ECO:0007669"/>
    <property type="project" value="UniProtKB-UniRule"/>
</dbReference>
<dbReference type="GO" id="GO:0045892">
    <property type="term" value="P:negative regulation of DNA-templated transcription"/>
    <property type="evidence" value="ECO:0007669"/>
    <property type="project" value="UniProtKB-UniRule"/>
</dbReference>
<dbReference type="FunFam" id="1.10.10.10:FF:000001">
    <property type="entry name" value="LysR family transcriptional regulator"/>
    <property type="match status" value="1"/>
</dbReference>
<dbReference type="Gene3D" id="3.40.190.10">
    <property type="entry name" value="Periplasmic binding protein-like II"/>
    <property type="match status" value="2"/>
</dbReference>
<dbReference type="Gene3D" id="1.10.10.10">
    <property type="entry name" value="Winged helix-like DNA-binding domain superfamily/Winged helix DNA-binding domain"/>
    <property type="match status" value="1"/>
</dbReference>
<dbReference type="HAMAP" id="MF_01233">
    <property type="entry name" value="HTH_type_HdfR"/>
    <property type="match status" value="1"/>
</dbReference>
<dbReference type="InterPro" id="IPR050176">
    <property type="entry name" value="LTTR"/>
</dbReference>
<dbReference type="InterPro" id="IPR005119">
    <property type="entry name" value="LysR_subst-bd"/>
</dbReference>
<dbReference type="InterPro" id="IPR020890">
    <property type="entry name" value="Tscrpt_reg_HTH_HdfR"/>
</dbReference>
<dbReference type="InterPro" id="IPR000847">
    <property type="entry name" value="Tscrpt_reg_HTH_LysR"/>
</dbReference>
<dbReference type="InterPro" id="IPR036388">
    <property type="entry name" value="WH-like_DNA-bd_sf"/>
</dbReference>
<dbReference type="InterPro" id="IPR036390">
    <property type="entry name" value="WH_DNA-bd_sf"/>
</dbReference>
<dbReference type="NCBIfam" id="NF002946">
    <property type="entry name" value="PRK03601.1"/>
    <property type="match status" value="1"/>
</dbReference>
<dbReference type="PANTHER" id="PTHR30579:SF8">
    <property type="entry name" value="HTH-TYPE TRANSCRIPTIONAL REGULATOR HDFR"/>
    <property type="match status" value="1"/>
</dbReference>
<dbReference type="PANTHER" id="PTHR30579">
    <property type="entry name" value="TRANSCRIPTIONAL REGULATOR"/>
    <property type="match status" value="1"/>
</dbReference>
<dbReference type="Pfam" id="PF00126">
    <property type="entry name" value="HTH_1"/>
    <property type="match status" value="1"/>
</dbReference>
<dbReference type="Pfam" id="PF03466">
    <property type="entry name" value="LysR_substrate"/>
    <property type="match status" value="1"/>
</dbReference>
<dbReference type="PRINTS" id="PR00039">
    <property type="entry name" value="HTHLYSR"/>
</dbReference>
<dbReference type="SUPFAM" id="SSF53850">
    <property type="entry name" value="Periplasmic binding protein-like II"/>
    <property type="match status" value="1"/>
</dbReference>
<dbReference type="SUPFAM" id="SSF46785">
    <property type="entry name" value="Winged helix' DNA-binding domain"/>
    <property type="match status" value="1"/>
</dbReference>
<dbReference type="PROSITE" id="PS50931">
    <property type="entry name" value="HTH_LYSR"/>
    <property type="match status" value="1"/>
</dbReference>
<gene>
    <name evidence="1" type="primary">hdfR</name>
    <name type="ordered locus">EcSMS35_4131</name>
</gene>
<name>HDFR_ECOSM</name>
<feature type="chain" id="PRO_1000139669" description="HTH-type transcriptional regulator HdfR">
    <location>
        <begin position="1"/>
        <end position="279"/>
    </location>
</feature>
<feature type="domain" description="HTH lysR-type" evidence="1">
    <location>
        <begin position="1"/>
        <end position="58"/>
    </location>
</feature>
<feature type="DNA-binding region" description="H-T-H motif" evidence="1">
    <location>
        <begin position="18"/>
        <end position="37"/>
    </location>
</feature>
<keyword id="KW-0238">DNA-binding</keyword>
<keyword id="KW-0678">Repressor</keyword>
<keyword id="KW-0804">Transcription</keyword>
<keyword id="KW-0805">Transcription regulation</keyword>
<organism>
    <name type="scientific">Escherichia coli (strain SMS-3-5 / SECEC)</name>
    <dbReference type="NCBI Taxonomy" id="439855"/>
    <lineage>
        <taxon>Bacteria</taxon>
        <taxon>Pseudomonadati</taxon>
        <taxon>Pseudomonadota</taxon>
        <taxon>Gammaproteobacteria</taxon>
        <taxon>Enterobacterales</taxon>
        <taxon>Enterobacteriaceae</taxon>
        <taxon>Escherichia</taxon>
    </lineage>
</organism>
<sequence>MDTELLKTFLEVSRTRHFGRAAESLYLTQSAVSFRIRQLENQLGVNLFTRHRNNIRLTAAGEKLLPYAETLMSTWQAARKEVAHTSRHNEFSIGASASLWECMLNQWLGRLYQNQDAHTGLQFEARIAQRQSLVKQLHERQLDLLITTEAPKMDEFSSQLLGYFTLALYTSAPSKLKGDLNYLRLEWGPDFQQHEAGLIGADEVPILTTSSAELAQQQIAMLNGCTWLPVSWARKKGGLHTVVDSTTLSRPLYAIWLQNSDKNALIRDLLKINVLDEVY</sequence>
<reference key="1">
    <citation type="journal article" date="2008" name="J. Bacteriol.">
        <title>Insights into the environmental resistance gene pool from the genome sequence of the multidrug-resistant environmental isolate Escherichia coli SMS-3-5.</title>
        <authorList>
            <person name="Fricke W.F."/>
            <person name="Wright M.S."/>
            <person name="Lindell A.H."/>
            <person name="Harkins D.M."/>
            <person name="Baker-Austin C."/>
            <person name="Ravel J."/>
            <person name="Stepanauskas R."/>
        </authorList>
    </citation>
    <scope>NUCLEOTIDE SEQUENCE [LARGE SCALE GENOMIC DNA]</scope>
    <source>
        <strain>SMS-3-5 / SECEC</strain>
    </source>
</reference>
<accession>B1LLU0</accession>
<protein>
    <recommendedName>
        <fullName evidence="1">HTH-type transcriptional regulator HdfR</fullName>
    </recommendedName>
    <alternativeName>
        <fullName evidence="1">H-NS-dependent flhDC regulator</fullName>
    </alternativeName>
</protein>
<proteinExistence type="inferred from homology"/>
<comment type="function">
    <text evidence="1">Negatively regulates the transcription of the flagellar master operon flhDC by binding to the upstream region of the operon.</text>
</comment>
<comment type="similarity">
    <text evidence="2">Belongs to the LysR transcriptional regulatory family.</text>
</comment>